<keyword id="KW-1185">Reference proteome</keyword>
<accession>Q8WZA8</accession>
<name>GC224_HUMAN</name>
<reference key="1">
    <citation type="journal article" date="2003" name="World J. Gastroenterol.">
        <title>A novel gene, GCRG224, is differentially expressed in human gastric mucosa.</title>
        <authorList>
            <person name="Wang G.-S."/>
            <person name="Wang M.-W."/>
            <person name="Wu B.-Y."/>
            <person name="You W.-D."/>
            <person name="Yang X.-Y."/>
        </authorList>
    </citation>
    <scope>NUCLEOTIDE SEQUENCE [MRNA]</scope>
    <scope>TISSUE SPECIFICITY</scope>
    <source>
        <tissue>Gastric carcinoma</tissue>
    </source>
</reference>
<feature type="chain" id="PRO_0000326398" description="Putative gastric cancer-related gene 224 protein">
    <location>
        <begin position="1"/>
        <end position="35"/>
    </location>
</feature>
<evidence type="ECO:0000269" key="1">
    <source>
    </source>
</evidence>
<evidence type="ECO:0000305" key="2"/>
<protein>
    <recommendedName>
        <fullName>Putative gastric cancer-related gene 224 protein</fullName>
        <shortName>GCRG-224</shortName>
        <shortName>GCRG-p224</shortName>
    </recommendedName>
</protein>
<comment type="tissue specificity">
    <text evidence="1">Expressed in gastric mucosa.</text>
</comment>
<comment type="caution">
    <text evidence="2">Product of a dubious gene prediction.</text>
</comment>
<organism>
    <name type="scientific">Homo sapiens</name>
    <name type="common">Human</name>
    <dbReference type="NCBI Taxonomy" id="9606"/>
    <lineage>
        <taxon>Eukaryota</taxon>
        <taxon>Metazoa</taxon>
        <taxon>Chordata</taxon>
        <taxon>Craniata</taxon>
        <taxon>Vertebrata</taxon>
        <taxon>Euteleostomi</taxon>
        <taxon>Mammalia</taxon>
        <taxon>Eutheria</taxon>
        <taxon>Euarchontoglires</taxon>
        <taxon>Primates</taxon>
        <taxon>Haplorrhini</taxon>
        <taxon>Catarrhini</taxon>
        <taxon>Hominidae</taxon>
        <taxon>Homo</taxon>
    </lineage>
</organism>
<dbReference type="EMBL" id="AF438406">
    <property type="protein sequence ID" value="AAL31630.1"/>
    <property type="molecule type" value="mRNA"/>
</dbReference>
<dbReference type="SMR" id="Q8WZA8"/>
<dbReference type="BioMuta" id="GCRG224"/>
<dbReference type="GeneCards" id="GCRG224"/>
<dbReference type="MIM" id="610888">
    <property type="type" value="gene"/>
</dbReference>
<dbReference type="neXtProt" id="NX_Q8WZA8"/>
<dbReference type="InParanoid" id="Q8WZA8"/>
<dbReference type="PAN-GO" id="Q8WZA8">
    <property type="GO annotations" value="0 GO annotations based on evolutionary models"/>
</dbReference>
<dbReference type="Pharos" id="Q8WZA8">
    <property type="development level" value="Tdark"/>
</dbReference>
<dbReference type="Proteomes" id="UP000005640">
    <property type="component" value="Unplaced"/>
</dbReference>
<proteinExistence type="uncertain"/>
<gene>
    <name type="primary">GCRG224</name>
</gene>
<sequence>MIPGNPSPGADLAVSKHFFSLSWFCGLLLLESKQK</sequence>